<protein>
    <recommendedName>
        <fullName evidence="1">UPF0173 metal-dependent hydrolase SAUSA300_1653</fullName>
    </recommendedName>
</protein>
<feature type="chain" id="PRO_1000013510" description="UPF0173 metal-dependent hydrolase SAUSA300_1653">
    <location>
        <begin position="1"/>
        <end position="229"/>
    </location>
</feature>
<comment type="similarity">
    <text evidence="1">Belongs to the UPF0173 family.</text>
</comment>
<name>Y1653_STAA3</name>
<reference key="1">
    <citation type="journal article" date="2006" name="Lancet">
        <title>Complete genome sequence of USA300, an epidemic clone of community-acquired meticillin-resistant Staphylococcus aureus.</title>
        <authorList>
            <person name="Diep B.A."/>
            <person name="Gill S.R."/>
            <person name="Chang R.F."/>
            <person name="Phan T.H."/>
            <person name="Chen J.H."/>
            <person name="Davidson M.G."/>
            <person name="Lin F."/>
            <person name="Lin J."/>
            <person name="Carleton H.A."/>
            <person name="Mongodin E.F."/>
            <person name="Sensabaugh G.F."/>
            <person name="Perdreau-Remington F."/>
        </authorList>
    </citation>
    <scope>NUCLEOTIDE SEQUENCE [LARGE SCALE GENOMIC DNA]</scope>
    <source>
        <strain>USA300</strain>
    </source>
</reference>
<sequence length="229" mass="25251">MKLSFHGQSTIYLEGNNKKVIVDPFISNNPKCDLNIETVQVDYIVLTHGHFDHFGDVVELAKKTGATVIGSAEMADYLSSYHGVENVHGMNIGGKANFDFGSVKFVQAFHSSSFTHENGIPVYLGMPMGIVFEVEGKTIYHTGDTGLFSDMSLIAKRHPVDVCFVPIGDNFTMGIDDASYAINEFIKPKISVPIHYDTFPLIEQDPQQFKDAVNVGDVQILKPGESVQF</sequence>
<accession>Q2FG31</accession>
<proteinExistence type="inferred from homology"/>
<keyword id="KW-0378">Hydrolase</keyword>
<gene>
    <name type="ordered locus">SAUSA300_1653</name>
</gene>
<organism>
    <name type="scientific">Staphylococcus aureus (strain USA300)</name>
    <dbReference type="NCBI Taxonomy" id="367830"/>
    <lineage>
        <taxon>Bacteria</taxon>
        <taxon>Bacillati</taxon>
        <taxon>Bacillota</taxon>
        <taxon>Bacilli</taxon>
        <taxon>Bacillales</taxon>
        <taxon>Staphylococcaceae</taxon>
        <taxon>Staphylococcus</taxon>
    </lineage>
</organism>
<dbReference type="EMBL" id="CP000255">
    <property type="protein sequence ID" value="ABD21646.1"/>
    <property type="molecule type" value="Genomic_DNA"/>
</dbReference>
<dbReference type="RefSeq" id="WP_000777188.1">
    <property type="nucleotide sequence ID" value="NZ_CP027476.1"/>
</dbReference>
<dbReference type="SMR" id="Q2FG31"/>
<dbReference type="KEGG" id="saa:SAUSA300_1653"/>
<dbReference type="HOGENOM" id="CLU_070010_4_1_9"/>
<dbReference type="OMA" id="MHYNTWP"/>
<dbReference type="Proteomes" id="UP000001939">
    <property type="component" value="Chromosome"/>
</dbReference>
<dbReference type="GO" id="GO:0016787">
    <property type="term" value="F:hydrolase activity"/>
    <property type="evidence" value="ECO:0007669"/>
    <property type="project" value="UniProtKB-UniRule"/>
</dbReference>
<dbReference type="CDD" id="cd06262">
    <property type="entry name" value="metallo-hydrolase-like_MBL-fold"/>
    <property type="match status" value="1"/>
</dbReference>
<dbReference type="Gene3D" id="3.60.15.10">
    <property type="entry name" value="Ribonuclease Z/Hydroxyacylglutathione hydrolase-like"/>
    <property type="match status" value="1"/>
</dbReference>
<dbReference type="HAMAP" id="MF_00457">
    <property type="entry name" value="UPF0173"/>
    <property type="match status" value="1"/>
</dbReference>
<dbReference type="InterPro" id="IPR001279">
    <property type="entry name" value="Metallo-B-lactamas"/>
</dbReference>
<dbReference type="InterPro" id="IPR036866">
    <property type="entry name" value="RibonucZ/Hydroxyglut_hydro"/>
</dbReference>
<dbReference type="InterPro" id="IPR022877">
    <property type="entry name" value="UPF0173"/>
</dbReference>
<dbReference type="InterPro" id="IPR050114">
    <property type="entry name" value="UPF0173_UPF0282_UlaG_hydrolase"/>
</dbReference>
<dbReference type="NCBIfam" id="NF001911">
    <property type="entry name" value="PRK00685.1"/>
    <property type="match status" value="1"/>
</dbReference>
<dbReference type="PANTHER" id="PTHR43546:SF3">
    <property type="entry name" value="UPF0173 METAL-DEPENDENT HYDROLASE MJ1163"/>
    <property type="match status" value="1"/>
</dbReference>
<dbReference type="PANTHER" id="PTHR43546">
    <property type="entry name" value="UPF0173 METAL-DEPENDENT HYDROLASE MJ1163-RELATED"/>
    <property type="match status" value="1"/>
</dbReference>
<dbReference type="Pfam" id="PF12706">
    <property type="entry name" value="Lactamase_B_2"/>
    <property type="match status" value="1"/>
</dbReference>
<dbReference type="SMART" id="SM00849">
    <property type="entry name" value="Lactamase_B"/>
    <property type="match status" value="1"/>
</dbReference>
<dbReference type="SUPFAM" id="SSF56281">
    <property type="entry name" value="Metallo-hydrolase/oxidoreductase"/>
    <property type="match status" value="1"/>
</dbReference>
<evidence type="ECO:0000255" key="1">
    <source>
        <dbReference type="HAMAP-Rule" id="MF_00457"/>
    </source>
</evidence>